<accession>Q6G9K2</accession>
<name>GLCT_STAAS</name>
<gene>
    <name type="primary">glcT</name>
    <name type="ordered locus">SAS1297</name>
</gene>
<organism>
    <name type="scientific">Staphylococcus aureus (strain MSSA476)</name>
    <dbReference type="NCBI Taxonomy" id="282459"/>
    <lineage>
        <taxon>Bacteria</taxon>
        <taxon>Bacillati</taxon>
        <taxon>Bacillota</taxon>
        <taxon>Bacilli</taxon>
        <taxon>Bacillales</taxon>
        <taxon>Staphylococcaceae</taxon>
        <taxon>Staphylococcus</taxon>
    </lineage>
</organism>
<comment type="similarity">
    <text evidence="2">Belongs to the transcriptional antiterminator BglG family. GlcT subfamily.</text>
</comment>
<protein>
    <recommendedName>
        <fullName>Protein GlcT</fullName>
    </recommendedName>
</protein>
<keyword id="KW-0677">Repeat</keyword>
<evidence type="ECO:0000255" key="1">
    <source>
        <dbReference type="PROSITE-ProRule" id="PRU00704"/>
    </source>
</evidence>
<evidence type="ECO:0000305" key="2"/>
<proteinExistence type="inferred from homology"/>
<feature type="chain" id="PRO_0000352611" description="Protein GlcT">
    <location>
        <begin position="1"/>
        <end position="283"/>
    </location>
</feature>
<feature type="domain" description="PRD 1" evidence="1">
    <location>
        <begin position="69"/>
        <end position="173"/>
    </location>
</feature>
<feature type="domain" description="PRD 2" evidence="1">
    <location>
        <begin position="174"/>
        <end position="283"/>
    </location>
</feature>
<sequence length="283" mass="32823">MGEYIVTKTLNNNVVVCTNNDQEVILIGKGIGFNKKEGMALNDQTITIEKIYKLESEQQKAHYKSLVEIADDNVLQVIIDSLNFISNTAMNVDSKQLVVSLTDHIIFAYKRLKQNQVISNPFVMETMQLYSDAYHIAKQVIDQLNAALDVHFPEDEIGFIALHIASNTEDLSMHEMTLINNVIKKGIDIIESDLVTTVDKESLQYQRFIRHVQFLIRRLRRKEYIHAQDDFVSMIKNHYPICYNTAYKILTMIQKQFDVNISESEIIYLTLHIHHFEERINQS</sequence>
<dbReference type="EMBL" id="BX571857">
    <property type="protein sequence ID" value="CAG43074.1"/>
    <property type="molecule type" value="Genomic_DNA"/>
</dbReference>
<dbReference type="RefSeq" id="WP_000505015.1">
    <property type="nucleotide sequence ID" value="NC_002953.3"/>
</dbReference>
<dbReference type="SMR" id="Q6G9K2"/>
<dbReference type="KEGG" id="sas:SAS1297"/>
<dbReference type="HOGENOM" id="CLU_078802_0_0_9"/>
<dbReference type="GO" id="GO:0003723">
    <property type="term" value="F:RNA binding"/>
    <property type="evidence" value="ECO:0007669"/>
    <property type="project" value="InterPro"/>
</dbReference>
<dbReference type="GO" id="GO:0045893">
    <property type="term" value="P:positive regulation of DNA-templated transcription"/>
    <property type="evidence" value="ECO:0007669"/>
    <property type="project" value="InterPro"/>
</dbReference>
<dbReference type="Gene3D" id="1.20.58.1950">
    <property type="match status" value="1"/>
</dbReference>
<dbReference type="Gene3D" id="1.20.890.100">
    <property type="match status" value="1"/>
</dbReference>
<dbReference type="Gene3D" id="2.30.24.10">
    <property type="entry name" value="CAT RNA-binding domain"/>
    <property type="match status" value="1"/>
</dbReference>
<dbReference type="Gene3D" id="1.10.1790.10">
    <property type="entry name" value="PRD domain"/>
    <property type="match status" value="1"/>
</dbReference>
<dbReference type="InterPro" id="IPR050661">
    <property type="entry name" value="BglG_antiterminators"/>
</dbReference>
<dbReference type="InterPro" id="IPR004341">
    <property type="entry name" value="CAT_RNA-bd_dom"/>
</dbReference>
<dbReference type="InterPro" id="IPR036650">
    <property type="entry name" value="CAT_RNA-bd_dom_sf"/>
</dbReference>
<dbReference type="InterPro" id="IPR011608">
    <property type="entry name" value="PRD"/>
</dbReference>
<dbReference type="InterPro" id="IPR036634">
    <property type="entry name" value="PRD_sf"/>
</dbReference>
<dbReference type="InterPro" id="IPR001550">
    <property type="entry name" value="Transcrpt_antitermin_CS"/>
</dbReference>
<dbReference type="NCBIfam" id="NF047357">
    <property type="entry name" value="antiterm_GlcT"/>
    <property type="match status" value="1"/>
</dbReference>
<dbReference type="PANTHER" id="PTHR30185">
    <property type="entry name" value="CRYPTIC BETA-GLUCOSIDE BGL OPERON ANTITERMINATOR"/>
    <property type="match status" value="1"/>
</dbReference>
<dbReference type="PANTHER" id="PTHR30185:SF16">
    <property type="entry name" value="PROTEIN GLCT"/>
    <property type="match status" value="1"/>
</dbReference>
<dbReference type="Pfam" id="PF03123">
    <property type="entry name" value="CAT_RBD"/>
    <property type="match status" value="1"/>
</dbReference>
<dbReference type="Pfam" id="PF00874">
    <property type="entry name" value="PRD"/>
    <property type="match status" value="2"/>
</dbReference>
<dbReference type="SMART" id="SM01061">
    <property type="entry name" value="CAT_RBD"/>
    <property type="match status" value="1"/>
</dbReference>
<dbReference type="SUPFAM" id="SSF63520">
    <property type="entry name" value="PTS-regulatory domain, PRD"/>
    <property type="match status" value="2"/>
</dbReference>
<dbReference type="SUPFAM" id="SSF50151">
    <property type="entry name" value="SacY-like RNA-binding domain"/>
    <property type="match status" value="1"/>
</dbReference>
<dbReference type="PROSITE" id="PS00654">
    <property type="entry name" value="PRD_1"/>
    <property type="match status" value="1"/>
</dbReference>
<dbReference type="PROSITE" id="PS51372">
    <property type="entry name" value="PRD_2"/>
    <property type="match status" value="2"/>
</dbReference>
<reference key="1">
    <citation type="journal article" date="2004" name="Proc. Natl. Acad. Sci. U.S.A.">
        <title>Complete genomes of two clinical Staphylococcus aureus strains: evidence for the rapid evolution of virulence and drug resistance.</title>
        <authorList>
            <person name="Holden M.T.G."/>
            <person name="Feil E.J."/>
            <person name="Lindsay J.A."/>
            <person name="Peacock S.J."/>
            <person name="Day N.P.J."/>
            <person name="Enright M.C."/>
            <person name="Foster T.J."/>
            <person name="Moore C.E."/>
            <person name="Hurst L."/>
            <person name="Atkin R."/>
            <person name="Barron A."/>
            <person name="Bason N."/>
            <person name="Bentley S.D."/>
            <person name="Chillingworth C."/>
            <person name="Chillingworth T."/>
            <person name="Churcher C."/>
            <person name="Clark L."/>
            <person name="Corton C."/>
            <person name="Cronin A."/>
            <person name="Doggett J."/>
            <person name="Dowd L."/>
            <person name="Feltwell T."/>
            <person name="Hance Z."/>
            <person name="Harris B."/>
            <person name="Hauser H."/>
            <person name="Holroyd S."/>
            <person name="Jagels K."/>
            <person name="James K.D."/>
            <person name="Lennard N."/>
            <person name="Line A."/>
            <person name="Mayes R."/>
            <person name="Moule S."/>
            <person name="Mungall K."/>
            <person name="Ormond D."/>
            <person name="Quail M.A."/>
            <person name="Rabbinowitsch E."/>
            <person name="Rutherford K.M."/>
            <person name="Sanders M."/>
            <person name="Sharp S."/>
            <person name="Simmonds M."/>
            <person name="Stevens K."/>
            <person name="Whitehead S."/>
            <person name="Barrell B.G."/>
            <person name="Spratt B.G."/>
            <person name="Parkhill J."/>
        </authorList>
    </citation>
    <scope>NUCLEOTIDE SEQUENCE [LARGE SCALE GENOMIC DNA]</scope>
    <source>
        <strain>MSSA476</strain>
    </source>
</reference>